<organism>
    <name type="scientific">Homo sapiens</name>
    <name type="common">Human</name>
    <dbReference type="NCBI Taxonomy" id="9606"/>
    <lineage>
        <taxon>Eukaryota</taxon>
        <taxon>Metazoa</taxon>
        <taxon>Chordata</taxon>
        <taxon>Craniata</taxon>
        <taxon>Vertebrata</taxon>
        <taxon>Euteleostomi</taxon>
        <taxon>Mammalia</taxon>
        <taxon>Eutheria</taxon>
        <taxon>Euarchontoglires</taxon>
        <taxon>Primates</taxon>
        <taxon>Haplorrhini</taxon>
        <taxon>Catarrhini</taxon>
        <taxon>Hominidae</taxon>
        <taxon>Homo</taxon>
    </lineage>
</organism>
<name>AQP7_HUMAN</name>
<feature type="chain" id="PRO_0000063958" description="Aquaporin-7">
    <location>
        <begin position="1"/>
        <end position="342"/>
    </location>
</feature>
<feature type="topological domain" description="Cytoplasmic" evidence="20">
    <location>
        <begin position="1"/>
        <end position="36"/>
    </location>
</feature>
<feature type="transmembrane region" description="Helical; Name=1" evidence="10 23 24">
    <location>
        <begin position="37"/>
        <end position="54"/>
    </location>
</feature>
<feature type="topological domain" description="Extracellular" evidence="20">
    <location>
        <begin position="55"/>
        <end position="67"/>
    </location>
</feature>
<feature type="transmembrane region" description="Helical; Name=2" evidence="10 23 24">
    <location>
        <begin position="68"/>
        <end position="85"/>
    </location>
</feature>
<feature type="topological domain" description="Cytoplasmic" evidence="20">
    <location>
        <begin position="86"/>
        <end position="89"/>
    </location>
</feature>
<feature type="intramembrane region" description="Discontinuously helical" evidence="10 23 24">
    <location>
        <begin position="90"/>
        <end position="103"/>
    </location>
</feature>
<feature type="topological domain" description="Cytoplasmic" evidence="20">
    <location>
        <begin position="104"/>
        <end position="111"/>
    </location>
</feature>
<feature type="transmembrane region" description="Helical; Name=3" evidence="10 23 24">
    <location>
        <begin position="112"/>
        <end position="132"/>
    </location>
</feature>
<feature type="topological domain" description="Extracellular" evidence="20">
    <location>
        <begin position="133"/>
        <end position="170"/>
    </location>
</feature>
<feature type="transmembrane region" description="Helical; Name=4" evidence="10 23 24">
    <location>
        <begin position="171"/>
        <end position="188"/>
    </location>
</feature>
<feature type="topological domain" description="Cytoplasmic" evidence="20">
    <location>
        <begin position="189"/>
        <end position="200"/>
    </location>
</feature>
<feature type="transmembrane region" description="Helical; Name=5" evidence="10 23 24">
    <location>
        <begin position="201"/>
        <end position="217"/>
    </location>
</feature>
<feature type="topological domain" description="Extracellular" evidence="20">
    <location>
        <begin position="218"/>
        <end position="221"/>
    </location>
</feature>
<feature type="intramembrane region" description="Discontinuously helical" evidence="10 23 24">
    <location>
        <begin position="222"/>
        <end position="235"/>
    </location>
</feature>
<feature type="topological domain" description="Extracellular" evidence="20">
    <location>
        <begin position="236"/>
        <end position="253"/>
    </location>
</feature>
<feature type="transmembrane region" description="Helical; Name=6" evidence="10 23 24">
    <location>
        <begin position="254"/>
        <end position="275"/>
    </location>
</feature>
<feature type="topological domain" description="Cytoplasmic" evidence="20">
    <location>
        <begin position="276"/>
        <end position="342"/>
    </location>
</feature>
<feature type="short sequence motif" description="NPA 1" evidence="20">
    <location>
        <begin position="94"/>
        <end position="96"/>
    </location>
</feature>
<feature type="short sequence motif" description="NPA 2" evidence="20">
    <location>
        <begin position="226"/>
        <end position="228"/>
    </location>
</feature>
<feature type="site" description="Selectivity filter" evidence="20">
    <location>
        <position position="74"/>
    </location>
</feature>
<feature type="site" description="Important for permeability to glycerol" evidence="8">
    <location>
        <position position="135"/>
    </location>
</feature>
<feature type="site" description="Selectivity filter" evidence="20">
    <location>
        <position position="223"/>
    </location>
</feature>
<feature type="site" description="Selectivity filter" evidence="20">
    <location>
        <position position="229"/>
    </location>
</feature>
<feature type="modified residue" description="Phosphoserine" evidence="2">
    <location>
        <position position="20"/>
    </location>
</feature>
<feature type="splice variant" id="VSP_056249" description="In isoform 2." evidence="13 14">
    <location>
        <begin position="1"/>
        <end position="92"/>
    </location>
</feature>
<feature type="splice variant" id="VSP_056250" description="In isoform 2." evidence="13 14">
    <original>SNGENWWWVPVVAPLLGAYLGGIIYLVFIGSTIPREPLKLEDSVAYEDHGITVLPKMGSHEPTISPLTPVSVSPANRSSVHPAPPLHESMALEHF</original>
    <variation>RYCPCPGPFL</variation>
    <location>
        <begin position="248"/>
        <end position="342"/>
    </location>
</feature>
<feature type="sequence variant" id="VAR_067253" description="In dbSNP:rs139297434." evidence="3">
    <original>R</original>
    <variation>C</variation>
    <location>
        <position position="12"/>
    </location>
</feature>
<feature type="sequence variant" id="VAR_061343" description="In dbSNP:rs2381003.">
    <original>L</original>
    <variation>V</variation>
    <location>
        <position position="38"/>
    </location>
</feature>
<feature type="sequence variant" id="VAR_067254" description="In dbSNP:rs4008659." evidence="3">
    <original>V</original>
    <variation>L</variation>
    <location>
        <position position="59"/>
    </location>
</feature>
<feature type="sequence variant" id="VAR_061344" description="In dbSNP:rs4008658.">
    <original>K</original>
    <variation>T</variation>
    <location>
        <position position="63"/>
    </location>
</feature>
<feature type="sequence variant" id="VAR_067255" description="Loss of glycerol channel activity; loss of water channel activity; dbSNP:rs62542743." evidence="3 4">
    <original>G</original>
    <variation>V</variation>
    <location>
        <position position="264"/>
    </location>
</feature>
<feature type="mutagenesis site" description="Loss of phosphorylation by PKA. Increased interaction with PLIN1." evidence="5">
    <original>ST</original>
    <variation>AA</variation>
    <location>
        <begin position="10"/>
        <end position="11"/>
    </location>
</feature>
<feature type="mutagenesis site" description="No effect on glycerol channel activity. No effect on water channel activity." evidence="9">
    <original>Y</original>
    <variation>A</variation>
    <location>
        <position position="67"/>
    </location>
</feature>
<feature type="mutagenesis site" description="No effect on glycerol channel activity. No effect on water channel activity. Decreased glycerol channel activity; when associated with F-233." evidence="9">
    <original>F</original>
    <variation>W</variation>
    <location>
        <position position="74"/>
    </location>
</feature>
<feature type="mutagenesis site" description="Strongly decreased glycerol channel activity. Mildly decreased water channel activity." evidence="8">
    <original>Y</original>
    <variation>A</variation>
    <location>
        <position position="135"/>
    </location>
</feature>
<feature type="mutagenesis site" description="Decreased glycerol channel activity. Mildly decreased water channel activity." evidence="8">
    <original>H</original>
    <variation>A</variation>
    <location>
        <position position="165"/>
    </location>
</feature>
<feature type="mutagenesis site" description="No effect on glycerol channel activity. No effect on water channel activity. Decreased glycerol channel activity; when associated with W-74." evidence="9">
    <original>Y</original>
    <variation>F</variation>
    <location>
        <position position="223"/>
    </location>
</feature>
<feature type="turn" evidence="26">
    <location>
        <begin position="26"/>
        <end position="30"/>
    </location>
</feature>
<feature type="helix" evidence="25">
    <location>
        <begin position="34"/>
        <end position="60"/>
    </location>
</feature>
<feature type="turn" evidence="25">
    <location>
        <begin position="62"/>
        <end position="64"/>
    </location>
</feature>
<feature type="helix" evidence="25">
    <location>
        <begin position="67"/>
        <end position="85"/>
    </location>
</feature>
<feature type="turn" evidence="25">
    <location>
        <begin position="86"/>
        <end position="89"/>
    </location>
</feature>
<feature type="helix" evidence="25">
    <location>
        <begin position="95"/>
        <end position="103"/>
    </location>
</feature>
<feature type="helix" evidence="25">
    <location>
        <begin position="111"/>
        <end position="133"/>
    </location>
</feature>
<feature type="helix" evidence="25">
    <location>
        <begin position="135"/>
        <end position="142"/>
    </location>
</feature>
<feature type="strand" evidence="25">
    <location>
        <begin position="148"/>
        <end position="152"/>
    </location>
</feature>
<feature type="helix" evidence="25">
    <location>
        <begin position="155"/>
        <end position="157"/>
    </location>
</feature>
<feature type="helix" evidence="25">
    <location>
        <begin position="168"/>
        <end position="190"/>
    </location>
</feature>
<feature type="turn" evidence="26">
    <location>
        <begin position="192"/>
        <end position="194"/>
    </location>
</feature>
<feature type="helix" evidence="25">
    <location>
        <begin position="202"/>
        <end position="217"/>
    </location>
</feature>
<feature type="turn" evidence="25">
    <location>
        <begin position="219"/>
        <end position="221"/>
    </location>
</feature>
<feature type="helix" evidence="25">
    <location>
        <begin position="227"/>
        <end position="240"/>
    </location>
</feature>
<feature type="helix" evidence="25">
    <location>
        <begin position="245"/>
        <end position="252"/>
    </location>
</feature>
<feature type="helix" evidence="25">
    <location>
        <begin position="253"/>
        <end position="255"/>
    </location>
</feature>
<feature type="helix" evidence="25">
    <location>
        <begin position="256"/>
        <end position="278"/>
    </location>
</feature>
<keyword id="KW-0002">3D-structure</keyword>
<keyword id="KW-0025">Alternative splicing</keyword>
<keyword id="KW-1003">Cell membrane</keyword>
<keyword id="KW-0968">Cytoplasmic vesicle</keyword>
<keyword id="KW-0551">Lipid droplet</keyword>
<keyword id="KW-0472">Membrane</keyword>
<keyword id="KW-0597">Phosphoprotein</keyword>
<keyword id="KW-1267">Proteomics identification</keyword>
<keyword id="KW-1185">Reference proteome</keyword>
<keyword id="KW-0677">Repeat</keyword>
<keyword id="KW-0812">Transmembrane</keyword>
<keyword id="KW-1133">Transmembrane helix</keyword>
<keyword id="KW-0813">Transport</keyword>
<gene>
    <name evidence="21" type="primary">AQP7</name>
    <name type="synonym">AQP7L</name>
    <name evidence="16" type="synonym">AQP9</name>
</gene>
<dbReference type="EMBL" id="AB006190">
    <property type="protein sequence ID" value="BAA21745.1"/>
    <property type="molecule type" value="mRNA"/>
</dbReference>
<dbReference type="EMBL" id="AB052626">
    <property type="protein sequence ID" value="BAC05693.1"/>
    <property type="molecule type" value="Genomic_DNA"/>
</dbReference>
<dbReference type="EMBL" id="AK300716">
    <property type="protein sequence ID" value="BAH13332.1"/>
    <property type="molecule type" value="mRNA"/>
</dbReference>
<dbReference type="EMBL" id="AK315879">
    <property type="protein sequence ID" value="BAF98770.1"/>
    <property type="molecule type" value="mRNA"/>
</dbReference>
<dbReference type="EMBL" id="AL356218">
    <property type="status" value="NOT_ANNOTATED_CDS"/>
    <property type="molecule type" value="Genomic_DNA"/>
</dbReference>
<dbReference type="EMBL" id="BC119672">
    <property type="protein sequence ID" value="AAI19673.1"/>
    <property type="molecule type" value="mRNA"/>
</dbReference>
<dbReference type="EMBL" id="BC119673">
    <property type="protein sequence ID" value="AAI19674.1"/>
    <property type="molecule type" value="mRNA"/>
</dbReference>
<dbReference type="CCDS" id="CCDS6541.1">
    <molecule id="O14520-1"/>
</dbReference>
<dbReference type="PIR" id="JC5791">
    <property type="entry name" value="JC5791"/>
</dbReference>
<dbReference type="RefSeq" id="NP_001161.1">
    <molecule id="O14520-1"/>
    <property type="nucleotide sequence ID" value="NM_001170.3"/>
</dbReference>
<dbReference type="RefSeq" id="NP_001305086.1">
    <property type="nucleotide sequence ID" value="NM_001318157.1"/>
</dbReference>
<dbReference type="RefSeq" id="NP_001305087.1">
    <property type="nucleotide sequence ID" value="NM_001318158.1"/>
</dbReference>
<dbReference type="RefSeq" id="NP_001363120.1">
    <molecule id="O14520-1"/>
    <property type="nucleotide sequence ID" value="NM_001376191.1"/>
</dbReference>
<dbReference type="RefSeq" id="XP_005251510.1">
    <property type="nucleotide sequence ID" value="XM_005251453.3"/>
</dbReference>
<dbReference type="RefSeq" id="XP_011516168.1">
    <property type="nucleotide sequence ID" value="XM_011517866.2"/>
</dbReference>
<dbReference type="PDB" id="6KXW">
    <property type="method" value="X-ray"/>
    <property type="resolution" value="3.70 A"/>
    <property type="chains" value="A/B/C/D=1-342"/>
</dbReference>
<dbReference type="PDB" id="6N1G">
    <property type="method" value="X-ray"/>
    <property type="resolution" value="4.00 A"/>
    <property type="chains" value="A/B/C/D=1-342"/>
</dbReference>
<dbReference type="PDB" id="6QZI">
    <property type="method" value="X-ray"/>
    <property type="resolution" value="1.90 A"/>
    <property type="chains" value="A=33-279"/>
</dbReference>
<dbReference type="PDB" id="6QZJ">
    <property type="method" value="X-ray"/>
    <property type="resolution" value="2.20 A"/>
    <property type="chains" value="A=33-279"/>
</dbReference>
<dbReference type="PDB" id="8AMW">
    <property type="method" value="EM"/>
    <property type="resolution" value="3.00 A"/>
    <property type="chains" value="A/B/C/D/E/F/G/H=1-342"/>
</dbReference>
<dbReference type="PDB" id="8AMX">
    <property type="method" value="EM"/>
    <property type="resolution" value="2.55 A"/>
    <property type="chains" value="A/B/C/D/E/F/G/H=1-342"/>
</dbReference>
<dbReference type="PDB" id="8C9H">
    <property type="method" value="EM"/>
    <property type="resolution" value="3.20 A"/>
    <property type="chains" value="A/B/C/D/E/F/G/H=1-342"/>
</dbReference>
<dbReference type="PDBsum" id="6KXW"/>
<dbReference type="PDBsum" id="6N1G"/>
<dbReference type="PDBsum" id="6QZI"/>
<dbReference type="PDBsum" id="6QZJ"/>
<dbReference type="PDBsum" id="8AMW"/>
<dbReference type="PDBsum" id="8AMX"/>
<dbReference type="PDBsum" id="8C9H"/>
<dbReference type="EMDB" id="EMD-15527"/>
<dbReference type="EMDB" id="EMD-15528"/>
<dbReference type="EMDB" id="EMD-16510"/>
<dbReference type="SMR" id="O14520"/>
<dbReference type="BioGRID" id="106860">
    <property type="interactions" value="5"/>
</dbReference>
<dbReference type="FunCoup" id="O14520">
    <property type="interactions" value="107"/>
</dbReference>
<dbReference type="IntAct" id="O14520">
    <property type="interactions" value="7"/>
</dbReference>
<dbReference type="STRING" id="9606.ENSP00000297988"/>
<dbReference type="DrugBank" id="DB09462">
    <property type="generic name" value="Glycerin"/>
</dbReference>
<dbReference type="TCDB" id="1.A.8.9.6">
    <property type="family name" value="the major intrinsic protein (mip) family"/>
</dbReference>
<dbReference type="iPTMnet" id="O14520"/>
<dbReference type="PhosphoSitePlus" id="O14520"/>
<dbReference type="BioMuta" id="AQP7"/>
<dbReference type="jPOST" id="O14520"/>
<dbReference type="MassIVE" id="O14520"/>
<dbReference type="PaxDb" id="9606-ENSP00000297988"/>
<dbReference type="PeptideAtlas" id="O14520"/>
<dbReference type="ProteomicsDB" id="48063">
    <molecule id="O14520-1"/>
</dbReference>
<dbReference type="ProteomicsDB" id="58691"/>
<dbReference type="Antibodypedia" id="10988">
    <property type="antibodies" value="139 antibodies from 25 providers"/>
</dbReference>
<dbReference type="DNASU" id="364"/>
<dbReference type="Ensembl" id="ENST00000297988.6">
    <molecule id="O14520-1"/>
    <property type="protein sequence ID" value="ENSP00000297988.1"/>
    <property type="gene ID" value="ENSG00000165269.13"/>
</dbReference>
<dbReference type="Ensembl" id="ENST00000447660.3">
    <molecule id="O14520-2"/>
    <property type="protein sequence ID" value="ENSP00000412868.2"/>
    <property type="gene ID" value="ENSG00000165269.13"/>
</dbReference>
<dbReference type="GeneID" id="364"/>
<dbReference type="KEGG" id="hsa:364"/>
<dbReference type="MANE-Select" id="ENST00000297988.6">
    <property type="protein sequence ID" value="ENSP00000297988.1"/>
    <property type="RefSeq nucleotide sequence ID" value="NM_001170.3"/>
    <property type="RefSeq protein sequence ID" value="NP_001161.1"/>
</dbReference>
<dbReference type="UCSC" id="uc003zst.3">
    <molecule id="O14520-1"/>
    <property type="organism name" value="human"/>
</dbReference>
<dbReference type="AGR" id="HGNC:640"/>
<dbReference type="CTD" id="364"/>
<dbReference type="DisGeNET" id="364"/>
<dbReference type="GeneCards" id="AQP7"/>
<dbReference type="HGNC" id="HGNC:640">
    <property type="gene designation" value="AQP7"/>
</dbReference>
<dbReference type="HPA" id="ENSG00000165269">
    <property type="expression patterns" value="Tissue enhanced (adipose tissue, breast, heart muscle)"/>
</dbReference>
<dbReference type="MalaCards" id="AQP7"/>
<dbReference type="MIM" id="602974">
    <property type="type" value="gene"/>
</dbReference>
<dbReference type="MIM" id="614411">
    <property type="type" value="phenotype"/>
</dbReference>
<dbReference type="neXtProt" id="NX_O14520"/>
<dbReference type="OpenTargets" id="ENSG00000165269"/>
<dbReference type="PharmGKB" id="PA24925"/>
<dbReference type="VEuPathDB" id="HostDB:ENSG00000165269"/>
<dbReference type="eggNOG" id="KOG0224">
    <property type="taxonomic scope" value="Eukaryota"/>
</dbReference>
<dbReference type="GeneTree" id="ENSGT00940000159054"/>
<dbReference type="InParanoid" id="O14520"/>
<dbReference type="OMA" id="CALGRMP"/>
<dbReference type="OrthoDB" id="3222at2759"/>
<dbReference type="PAN-GO" id="O14520">
    <property type="GO annotations" value="7 GO annotations based on evolutionary models"/>
</dbReference>
<dbReference type="PhylomeDB" id="O14520"/>
<dbReference type="TreeFam" id="TF313173"/>
<dbReference type="BioCyc" id="MetaCyc:ENSG00000165269-MONOMER"/>
<dbReference type="PathwayCommons" id="O14520"/>
<dbReference type="Reactome" id="R-HSA-432030">
    <property type="pathway name" value="Transport of glycerol from adipocytes to the liver by Aquaporins"/>
</dbReference>
<dbReference type="Reactome" id="R-HSA-432047">
    <property type="pathway name" value="Passive transport by Aquaporins"/>
</dbReference>
<dbReference type="SignaLink" id="O14520"/>
<dbReference type="BioGRID-ORCS" id="364">
    <property type="hits" value="387 hits in 1067 CRISPR screens"/>
</dbReference>
<dbReference type="ChiTaRS" id="AQP7">
    <property type="organism name" value="human"/>
</dbReference>
<dbReference type="GeneWiki" id="AQP7"/>
<dbReference type="GenomeRNAi" id="364"/>
<dbReference type="Pharos" id="O14520">
    <property type="development level" value="Tbio"/>
</dbReference>
<dbReference type="PRO" id="PR:O14520"/>
<dbReference type="Proteomes" id="UP000005640">
    <property type="component" value="Chromosome 9"/>
</dbReference>
<dbReference type="RNAct" id="O14520">
    <property type="molecule type" value="protein"/>
</dbReference>
<dbReference type="Bgee" id="ENSG00000165269">
    <property type="expression patterns" value="Expressed in apex of heart and 97 other cell types or tissues"/>
</dbReference>
<dbReference type="ExpressionAtlas" id="O14520">
    <property type="expression patterns" value="baseline and differential"/>
</dbReference>
<dbReference type="GO" id="GO:0016323">
    <property type="term" value="C:basolateral plasma membrane"/>
    <property type="evidence" value="ECO:0000318"/>
    <property type="project" value="GO_Central"/>
</dbReference>
<dbReference type="GO" id="GO:0005911">
    <property type="term" value="C:cell-cell junction"/>
    <property type="evidence" value="ECO:0000314"/>
    <property type="project" value="UniProtKB"/>
</dbReference>
<dbReference type="GO" id="GO:0005737">
    <property type="term" value="C:cytoplasm"/>
    <property type="evidence" value="ECO:0000314"/>
    <property type="project" value="UniProtKB"/>
</dbReference>
<dbReference type="GO" id="GO:0030659">
    <property type="term" value="C:cytoplasmic vesicle membrane"/>
    <property type="evidence" value="ECO:0007669"/>
    <property type="project" value="UniProtKB-SubCell"/>
</dbReference>
<dbReference type="GO" id="GO:0005811">
    <property type="term" value="C:lipid droplet"/>
    <property type="evidence" value="ECO:0007669"/>
    <property type="project" value="UniProtKB-SubCell"/>
</dbReference>
<dbReference type="GO" id="GO:0005886">
    <property type="term" value="C:plasma membrane"/>
    <property type="evidence" value="ECO:0000314"/>
    <property type="project" value="UniProtKB"/>
</dbReference>
<dbReference type="GO" id="GO:0015254">
    <property type="term" value="F:glycerol channel activity"/>
    <property type="evidence" value="ECO:0000314"/>
    <property type="project" value="UniProtKB"/>
</dbReference>
<dbReference type="GO" id="GO:0015204">
    <property type="term" value="F:urea transmembrane transporter activity"/>
    <property type="evidence" value="ECO:0000314"/>
    <property type="project" value="UniProtKB"/>
</dbReference>
<dbReference type="GO" id="GO:0015250">
    <property type="term" value="F:water channel activity"/>
    <property type="evidence" value="ECO:0000314"/>
    <property type="project" value="UniProtKB"/>
</dbReference>
<dbReference type="GO" id="GO:0015793">
    <property type="term" value="P:glycerol transmembrane transport"/>
    <property type="evidence" value="ECO:0000314"/>
    <property type="project" value="UniProtKB"/>
</dbReference>
<dbReference type="GO" id="GO:0006833">
    <property type="term" value="P:water transport"/>
    <property type="evidence" value="ECO:0000314"/>
    <property type="project" value="UniProtKB"/>
</dbReference>
<dbReference type="CDD" id="cd00333">
    <property type="entry name" value="MIP"/>
    <property type="match status" value="1"/>
</dbReference>
<dbReference type="FunFam" id="1.20.1080.10:FF:000005">
    <property type="entry name" value="Aquaporin 3"/>
    <property type="match status" value="1"/>
</dbReference>
<dbReference type="Gene3D" id="1.20.1080.10">
    <property type="entry name" value="Glycerol uptake facilitator protein"/>
    <property type="match status" value="1"/>
</dbReference>
<dbReference type="InterPro" id="IPR023271">
    <property type="entry name" value="Aquaporin-like"/>
</dbReference>
<dbReference type="InterPro" id="IPR000425">
    <property type="entry name" value="MIP"/>
</dbReference>
<dbReference type="InterPro" id="IPR050363">
    <property type="entry name" value="MIP/Aquaporin"/>
</dbReference>
<dbReference type="NCBIfam" id="TIGR00861">
    <property type="entry name" value="MIP"/>
    <property type="match status" value="1"/>
</dbReference>
<dbReference type="PANTHER" id="PTHR43829">
    <property type="entry name" value="AQUAPORIN OR AQUAGLYCEROPORIN RELATED"/>
    <property type="match status" value="1"/>
</dbReference>
<dbReference type="PANTHER" id="PTHR43829:SF15">
    <property type="entry name" value="AQUAPORIN-7"/>
    <property type="match status" value="1"/>
</dbReference>
<dbReference type="Pfam" id="PF00230">
    <property type="entry name" value="MIP"/>
    <property type="match status" value="1"/>
</dbReference>
<dbReference type="PRINTS" id="PR02019">
    <property type="entry name" value="AQUAPORIN7"/>
</dbReference>
<dbReference type="PRINTS" id="PR00783">
    <property type="entry name" value="MINTRINSICP"/>
</dbReference>
<dbReference type="SUPFAM" id="SSF81338">
    <property type="entry name" value="Aquaporin-like"/>
    <property type="match status" value="1"/>
</dbReference>
<reference key="1">
    <citation type="journal article" date="1997" name="Biochem. Biophys. Res. Commun.">
        <title>Molecular cloning and expression of a novel human aquaporin from adipose tissue with glycerol permeability.</title>
        <authorList>
            <person name="Kuriyama H."/>
            <person name="Kawamoto S."/>
            <person name="Ishida N."/>
            <person name="Ohno I."/>
            <person name="Mita S."/>
            <person name="Matsuzawa Y."/>
            <person name="Matsubara K."/>
            <person name="Okubo K."/>
        </authorList>
    </citation>
    <scope>NUCLEOTIDE SEQUENCE [MRNA] (ISOFORM 1)</scope>
    <scope>FUNCTION</scope>
    <scope>TRANSPORTER ACTIVITY</scope>
    <scope>SUBCELLULAR LOCATION</scope>
    <scope>TISSUE SPECIFICITY</scope>
    <source>
        <tissue>Adipose tissue</tissue>
    </source>
</reference>
<reference key="2">
    <citation type="journal article" date="2002" name="Eur. J. Biochem.">
        <title>Human aquaporin adipose (AQPap) gene. Genomic structure, promoter analysis and functional mutation.</title>
        <authorList>
            <person name="Kondo H."/>
            <person name="Shimomura I."/>
            <person name="Kishida K."/>
            <person name="Kuriyama H."/>
            <person name="Makino Y."/>
            <person name="Nishizawa H."/>
            <person name="Matsuda M."/>
            <person name="Maeda N."/>
            <person name="Nagaretani H."/>
            <person name="Kihara S."/>
            <person name="Kurachi Y."/>
            <person name="Nakamura T."/>
            <person name="Funahashi T."/>
            <person name="Matsuzawa Y."/>
        </authorList>
    </citation>
    <scope>NUCLEOTIDE SEQUENCE [GENOMIC DNA]</scope>
    <scope>INVOLVEMENT IN GLYCQTL</scope>
    <scope>VARIANTS CYS-12; LEU-59 AND VAL-264</scope>
    <scope>CHARACTERIZATION OF VARIANT VAL-264</scope>
    <scope>FUNCTION</scope>
    <scope>SUBCELLULAR LOCATION</scope>
</reference>
<reference key="3">
    <citation type="journal article" date="2004" name="Nat. Genet.">
        <title>Complete sequencing and characterization of 21,243 full-length human cDNAs.</title>
        <authorList>
            <person name="Ota T."/>
            <person name="Suzuki Y."/>
            <person name="Nishikawa T."/>
            <person name="Otsuki T."/>
            <person name="Sugiyama T."/>
            <person name="Irie R."/>
            <person name="Wakamatsu A."/>
            <person name="Hayashi K."/>
            <person name="Sato H."/>
            <person name="Nagai K."/>
            <person name="Kimura K."/>
            <person name="Makita H."/>
            <person name="Sekine M."/>
            <person name="Obayashi M."/>
            <person name="Nishi T."/>
            <person name="Shibahara T."/>
            <person name="Tanaka T."/>
            <person name="Ishii S."/>
            <person name="Yamamoto J."/>
            <person name="Saito K."/>
            <person name="Kawai Y."/>
            <person name="Isono Y."/>
            <person name="Nakamura Y."/>
            <person name="Nagahari K."/>
            <person name="Murakami K."/>
            <person name="Yasuda T."/>
            <person name="Iwayanagi T."/>
            <person name="Wagatsuma M."/>
            <person name="Shiratori A."/>
            <person name="Sudo H."/>
            <person name="Hosoiri T."/>
            <person name="Kaku Y."/>
            <person name="Kodaira H."/>
            <person name="Kondo H."/>
            <person name="Sugawara M."/>
            <person name="Takahashi M."/>
            <person name="Kanda K."/>
            <person name="Yokoi T."/>
            <person name="Furuya T."/>
            <person name="Kikkawa E."/>
            <person name="Omura Y."/>
            <person name="Abe K."/>
            <person name="Kamihara K."/>
            <person name="Katsuta N."/>
            <person name="Sato K."/>
            <person name="Tanikawa M."/>
            <person name="Yamazaki M."/>
            <person name="Ninomiya K."/>
            <person name="Ishibashi T."/>
            <person name="Yamashita H."/>
            <person name="Murakawa K."/>
            <person name="Fujimori K."/>
            <person name="Tanai H."/>
            <person name="Kimata M."/>
            <person name="Watanabe M."/>
            <person name="Hiraoka S."/>
            <person name="Chiba Y."/>
            <person name="Ishida S."/>
            <person name="Ono Y."/>
            <person name="Takiguchi S."/>
            <person name="Watanabe S."/>
            <person name="Yosida M."/>
            <person name="Hotuta T."/>
            <person name="Kusano J."/>
            <person name="Kanehori K."/>
            <person name="Takahashi-Fujii A."/>
            <person name="Hara H."/>
            <person name="Tanase T.-O."/>
            <person name="Nomura Y."/>
            <person name="Togiya S."/>
            <person name="Komai F."/>
            <person name="Hara R."/>
            <person name="Takeuchi K."/>
            <person name="Arita M."/>
            <person name="Imose N."/>
            <person name="Musashino K."/>
            <person name="Yuuki H."/>
            <person name="Oshima A."/>
            <person name="Sasaki N."/>
            <person name="Aotsuka S."/>
            <person name="Yoshikawa Y."/>
            <person name="Matsunawa H."/>
            <person name="Ichihara T."/>
            <person name="Shiohata N."/>
            <person name="Sano S."/>
            <person name="Moriya S."/>
            <person name="Momiyama H."/>
            <person name="Satoh N."/>
            <person name="Takami S."/>
            <person name="Terashima Y."/>
            <person name="Suzuki O."/>
            <person name="Nakagawa S."/>
            <person name="Senoh A."/>
            <person name="Mizoguchi H."/>
            <person name="Goto Y."/>
            <person name="Shimizu F."/>
            <person name="Wakebe H."/>
            <person name="Hishigaki H."/>
            <person name="Watanabe T."/>
            <person name="Sugiyama A."/>
            <person name="Takemoto M."/>
            <person name="Kawakami B."/>
            <person name="Yamazaki M."/>
            <person name="Watanabe K."/>
            <person name="Kumagai A."/>
            <person name="Itakura S."/>
            <person name="Fukuzumi Y."/>
            <person name="Fujimori Y."/>
            <person name="Komiyama M."/>
            <person name="Tashiro H."/>
            <person name="Tanigami A."/>
            <person name="Fujiwara T."/>
            <person name="Ono T."/>
            <person name="Yamada K."/>
            <person name="Fujii Y."/>
            <person name="Ozaki K."/>
            <person name="Hirao M."/>
            <person name="Ohmori Y."/>
            <person name="Kawabata A."/>
            <person name="Hikiji T."/>
            <person name="Kobatake N."/>
            <person name="Inagaki H."/>
            <person name="Ikema Y."/>
            <person name="Okamoto S."/>
            <person name="Okitani R."/>
            <person name="Kawakami T."/>
            <person name="Noguchi S."/>
            <person name="Itoh T."/>
            <person name="Shigeta K."/>
            <person name="Senba T."/>
            <person name="Matsumura K."/>
            <person name="Nakajima Y."/>
            <person name="Mizuno T."/>
            <person name="Morinaga M."/>
            <person name="Sasaki M."/>
            <person name="Togashi T."/>
            <person name="Oyama M."/>
            <person name="Hata H."/>
            <person name="Watanabe M."/>
            <person name="Komatsu T."/>
            <person name="Mizushima-Sugano J."/>
            <person name="Satoh T."/>
            <person name="Shirai Y."/>
            <person name="Takahashi Y."/>
            <person name="Nakagawa K."/>
            <person name="Okumura K."/>
            <person name="Nagase T."/>
            <person name="Nomura N."/>
            <person name="Kikuchi H."/>
            <person name="Masuho Y."/>
            <person name="Yamashita R."/>
            <person name="Nakai K."/>
            <person name="Yada T."/>
            <person name="Nakamura Y."/>
            <person name="Ohara O."/>
            <person name="Isogai T."/>
            <person name="Sugano S."/>
        </authorList>
    </citation>
    <scope>NUCLEOTIDE SEQUENCE [LARGE SCALE MRNA] (ISOFORM 2)</scope>
    <source>
        <tissue>Skeletal muscle</tissue>
    </source>
</reference>
<reference key="4">
    <citation type="journal article" date="2004" name="Nature">
        <title>DNA sequence and analysis of human chromosome 9.</title>
        <authorList>
            <person name="Humphray S.J."/>
            <person name="Oliver K."/>
            <person name="Hunt A.R."/>
            <person name="Plumb R.W."/>
            <person name="Loveland J.E."/>
            <person name="Howe K.L."/>
            <person name="Andrews T.D."/>
            <person name="Searle S."/>
            <person name="Hunt S.E."/>
            <person name="Scott C.E."/>
            <person name="Jones M.C."/>
            <person name="Ainscough R."/>
            <person name="Almeida J.P."/>
            <person name="Ambrose K.D."/>
            <person name="Ashwell R.I.S."/>
            <person name="Babbage A.K."/>
            <person name="Babbage S."/>
            <person name="Bagguley C.L."/>
            <person name="Bailey J."/>
            <person name="Banerjee R."/>
            <person name="Barker D.J."/>
            <person name="Barlow K.F."/>
            <person name="Bates K."/>
            <person name="Beasley H."/>
            <person name="Beasley O."/>
            <person name="Bird C.P."/>
            <person name="Bray-Allen S."/>
            <person name="Brown A.J."/>
            <person name="Brown J.Y."/>
            <person name="Burford D."/>
            <person name="Burrill W."/>
            <person name="Burton J."/>
            <person name="Carder C."/>
            <person name="Carter N.P."/>
            <person name="Chapman J.C."/>
            <person name="Chen Y."/>
            <person name="Clarke G."/>
            <person name="Clark S.Y."/>
            <person name="Clee C.M."/>
            <person name="Clegg S."/>
            <person name="Collier R.E."/>
            <person name="Corby N."/>
            <person name="Crosier M."/>
            <person name="Cummings A.T."/>
            <person name="Davies J."/>
            <person name="Dhami P."/>
            <person name="Dunn M."/>
            <person name="Dutta I."/>
            <person name="Dyer L.W."/>
            <person name="Earthrowl M.E."/>
            <person name="Faulkner L."/>
            <person name="Fleming C.J."/>
            <person name="Frankish A."/>
            <person name="Frankland J.A."/>
            <person name="French L."/>
            <person name="Fricker D.G."/>
            <person name="Garner P."/>
            <person name="Garnett J."/>
            <person name="Ghori J."/>
            <person name="Gilbert J.G.R."/>
            <person name="Glison C."/>
            <person name="Grafham D.V."/>
            <person name="Gribble S."/>
            <person name="Griffiths C."/>
            <person name="Griffiths-Jones S."/>
            <person name="Grocock R."/>
            <person name="Guy J."/>
            <person name="Hall R.E."/>
            <person name="Hammond S."/>
            <person name="Harley J.L."/>
            <person name="Harrison E.S.I."/>
            <person name="Hart E.A."/>
            <person name="Heath P.D."/>
            <person name="Henderson C.D."/>
            <person name="Hopkins B.L."/>
            <person name="Howard P.J."/>
            <person name="Howden P.J."/>
            <person name="Huckle E."/>
            <person name="Johnson C."/>
            <person name="Johnson D."/>
            <person name="Joy A.A."/>
            <person name="Kay M."/>
            <person name="Keenan S."/>
            <person name="Kershaw J.K."/>
            <person name="Kimberley A.M."/>
            <person name="King A."/>
            <person name="Knights A."/>
            <person name="Laird G.K."/>
            <person name="Langford C."/>
            <person name="Lawlor S."/>
            <person name="Leongamornlert D.A."/>
            <person name="Leversha M."/>
            <person name="Lloyd C."/>
            <person name="Lloyd D.M."/>
            <person name="Lovell J."/>
            <person name="Martin S."/>
            <person name="Mashreghi-Mohammadi M."/>
            <person name="Matthews L."/>
            <person name="McLaren S."/>
            <person name="McLay K.E."/>
            <person name="McMurray A."/>
            <person name="Milne S."/>
            <person name="Nickerson T."/>
            <person name="Nisbett J."/>
            <person name="Nordsiek G."/>
            <person name="Pearce A.V."/>
            <person name="Peck A.I."/>
            <person name="Porter K.M."/>
            <person name="Pandian R."/>
            <person name="Pelan S."/>
            <person name="Phillimore B."/>
            <person name="Povey S."/>
            <person name="Ramsey Y."/>
            <person name="Rand V."/>
            <person name="Scharfe M."/>
            <person name="Sehra H.K."/>
            <person name="Shownkeen R."/>
            <person name="Sims S.K."/>
            <person name="Skuce C.D."/>
            <person name="Smith M."/>
            <person name="Steward C.A."/>
            <person name="Swarbreck D."/>
            <person name="Sycamore N."/>
            <person name="Tester J."/>
            <person name="Thorpe A."/>
            <person name="Tracey A."/>
            <person name="Tromans A."/>
            <person name="Thomas D.W."/>
            <person name="Wall M."/>
            <person name="Wallis J.M."/>
            <person name="West A.P."/>
            <person name="Whitehead S.L."/>
            <person name="Willey D.L."/>
            <person name="Williams S.A."/>
            <person name="Wilming L."/>
            <person name="Wray P.W."/>
            <person name="Young L."/>
            <person name="Ashurst J.L."/>
            <person name="Coulson A."/>
            <person name="Blocker H."/>
            <person name="Durbin R.M."/>
            <person name="Sulston J.E."/>
            <person name="Hubbard T."/>
            <person name="Jackson M.J."/>
            <person name="Bentley D.R."/>
            <person name="Beck S."/>
            <person name="Rogers J."/>
            <person name="Dunham I."/>
        </authorList>
    </citation>
    <scope>NUCLEOTIDE SEQUENCE [LARGE SCALE GENOMIC DNA]</scope>
</reference>
<reference key="5">
    <citation type="journal article" date="2004" name="Genome Res.">
        <title>The status, quality, and expansion of the NIH full-length cDNA project: the Mammalian Gene Collection (MGC).</title>
        <authorList>
            <consortium name="The MGC Project Team"/>
        </authorList>
    </citation>
    <scope>NUCLEOTIDE SEQUENCE [LARGE SCALE MRNA] (ISOFORM 2)</scope>
</reference>
<reference key="6">
    <citation type="journal article" date="2016" name="Int. J. Mol. Sci.">
        <title>Aquaporin-Mediated Water and Hydrogen Peroxide Transport Is Involved in Normal Human Spermatozoa Functioning.</title>
        <authorList>
            <person name="Laforenza U."/>
            <person name="Pellavio G."/>
            <person name="Marchetti A.L."/>
            <person name="Omes C."/>
            <person name="Todaro F."/>
            <person name="Gastaldi G."/>
        </authorList>
    </citation>
    <scope>SUBCELLULAR LOCATION</scope>
    <scope>TISSUE SPECIFICITY</scope>
</reference>
<reference key="7">
    <citation type="journal article" date="2016" name="Metabolism">
        <title>Perilipin 1 binds to aquaporin 7 in human adipocytes and controls its mobility via protein kinase A mediated phosphorylation.</title>
        <authorList>
            <person name="Hansen J.S."/>
            <person name="Krintel C."/>
            <person name="Hernebring M."/>
            <person name="Haataja T.J."/>
            <person name="de Mare S."/>
            <person name="Wasserstrom S."/>
            <person name="Kosinska-Eriksson U."/>
            <person name="Palmgren M."/>
            <person name="Holm C."/>
            <person name="Stenkula K.G."/>
            <person name="Jones H.A."/>
            <person name="Lindkvist-Petersson K."/>
        </authorList>
    </citation>
    <scope>INTERACTION WITH PLIN1</scope>
    <scope>SUBCELLULAR LOCATION</scope>
    <scope>PHOSPHORYLATION</scope>
    <scope>MUTAGENESIS OF 10-SER-THR-11</scope>
</reference>
<reference key="8">
    <citation type="journal article" date="2018" name="Cells">
        <title>Molecular Basis of Aquaporin-7 Permeability Regulation by pH.</title>
        <authorList>
            <person name="Mosca A.F."/>
            <person name="de Almeida A."/>
            <person name="Wragg D."/>
            <person name="Martins A.P."/>
            <person name="Sabir F."/>
            <person name="Leoni S."/>
            <person name="Moura T.F."/>
            <person name="Prista C."/>
            <person name="Casini A."/>
            <person name="Soveral G."/>
        </authorList>
    </citation>
    <scope>FUNCTION</scope>
    <scope>TRANSPORTER ACTIVITY</scope>
    <scope>ACTIVITY REGULATION</scope>
    <scope>SUBCELLULAR LOCATION</scope>
    <scope>SUBUNIT</scope>
    <scope>MUTAGENESIS OF TYR-135 AND HIS-165</scope>
</reference>
<reference key="9">
    <citation type="journal article" date="2018" name="Nat. Commun.">
        <title>Human adipose glycerol flux is regulated by a pH gate in AQP10.</title>
        <authorList>
            <person name="Gotfryd K."/>
            <person name="Mosca A.F."/>
            <person name="Missel J.W."/>
            <person name="Truelsen S.F."/>
            <person name="Wang K."/>
            <person name="Spulber M."/>
            <person name="Krabbe S."/>
            <person name="Helix-Nielsen C."/>
            <person name="Laforenza U."/>
            <person name="Soveral G."/>
            <person name="Pedersen P.A."/>
            <person name="Gourdon P."/>
        </authorList>
    </citation>
    <scope>FUNCTION</scope>
    <scope>TRANSPORTER ACTIVITY</scope>
    <scope>ACTIVITY REGULATION</scope>
</reference>
<reference evidence="22" key="10">
    <citation type="journal article" date="2020" name="Front. Physiol.">
        <title>Aquaporin-7: A Dynamic Aquaglyceroporin With Greater Water and Glycerol Permeability Than Its Bacterial Homolog GlpF.</title>
        <authorList>
            <person name="Moss F.J."/>
            <person name="Mahinthichaichan P."/>
            <person name="Lodowski D.T."/>
            <person name="Kowatz T."/>
            <person name="Tajkhorshid E."/>
            <person name="Engel A."/>
            <person name="Boron W.F."/>
            <person name="Vahedi-Faridi A."/>
        </authorList>
    </citation>
    <scope>X-RAY CRYSTALLOGRAPHY (4.00 ANGSTROMS)</scope>
    <scope>FUNCTION</scope>
    <scope>TRANSPORTER ACTIVITY</scope>
    <scope>SUBUNIT</scope>
    <scope>MUTAGENESIS OF TYR-67; PHE-74 AND TYR-223</scope>
</reference>
<reference evidence="23 24" key="11">
    <citation type="journal article" date="2023" name="Nat. Commun.">
        <title>Cryo-EM structure supports a role of AQP7 as a junction protein.</title>
        <authorList>
            <person name="Huang P."/>
            <person name="Venskutonyte R."/>
            <person name="Prasad R.B."/>
            <person name="Ardalani H."/>
            <person name="de Mare S.W."/>
            <person name="Fan X."/>
            <person name="Li P."/>
            <person name="Spegel P."/>
            <person name="Yan N."/>
            <person name="Gourdon P."/>
            <person name="Artner I."/>
            <person name="Lindkvist-Petersson K."/>
        </authorList>
    </citation>
    <scope>STRUCTURE BY ELECTRON MICROSCOPY (2.55 ANGSTROMS) IN COMPLEX WITH GLYCEROL</scope>
    <scope>FUNCTION</scope>
    <scope>TRANSPORTER ACTIVITY</scope>
    <scope>SUBUNIT</scope>
    <scope>TOPOLOGY</scope>
    <scope>DOMAIN</scope>
    <scope>SITE</scope>
</reference>
<reference key="12">
    <citation type="journal article" date="2007" name="J. Clin. Endocrinol. Metab.">
        <title>Adipose tissue expression of the glycerol channel aquaporin-7 gene is altered in severe obesity but not in type 2 diabetes.</title>
        <authorList>
            <person name="Ceperuelo-Mallafre V."/>
            <person name="Miranda M."/>
            <person name="Chacon M.R."/>
            <person name="Vilarrasa N."/>
            <person name="Megia A."/>
            <person name="Gutierrez C."/>
            <person name="Fernandez-Real J.M."/>
            <person name="Gomez J.M."/>
            <person name="Caubet E."/>
            <person name="Fruhbeck G."/>
            <person name="Vendrell J."/>
        </authorList>
    </citation>
    <scope>VARIANT VAL-264</scope>
</reference>
<sequence>MVQASGHRRSTRGSKMVSWSVIAKIQEILQRKMVREFLAEFMSTYVMMVFGLGSVAHMVLNKKYGSYLGVNLGFGFGVTMGVHVAGRISGAHMNAAVTFANCALGRVPWRKFPVYVLGQFLGSFLAAATIYSLFYTAILHFSGGQLMVTGPVATAGIFATYLPDHMTLWRGFLNEAWLTGMLQLCLFAITDQENNPALPGTEALVIGILVVIIGVSLGMNTGYAINPSRDLPPRIFTFIAGWGKQVFSNGENWWWVPVVAPLLGAYLGGIIYLVFIGSTIPREPLKLEDSVAYEDHGITVLPKMGSHEPTISPLTPVSVSPANRSSVHPAPPLHESMALEHF</sequence>
<protein>
    <recommendedName>
        <fullName evidence="18">Aquaporin-7</fullName>
        <shortName>AQP-7</shortName>
    </recommendedName>
    <alternativeName>
        <fullName evidence="15">Aquaglyceroporin-7</fullName>
    </alternativeName>
    <alternativeName>
        <fullName evidence="12">Aquaporin adipose</fullName>
        <shortName evidence="12">AQPap</shortName>
    </alternativeName>
    <alternativeName>
        <fullName>Aquaporin-7-like</fullName>
    </alternativeName>
</protein>
<proteinExistence type="evidence at protein level"/>
<comment type="function">
    <text evidence="1 3 7 8 10 11">Aquaglyceroporins form homotetrameric transmembrane channels, with each monomer independently mediating glycerol and water transport across the plasma membrane along their osmotic gradient (PubMed:11952783, PubMed:30420639, PubMed:30423801, PubMed:36737436, PubMed:9405233). Could also be permeable to urea (PubMed:9405233). Mediates the efflux of glycerol, formed upon triglyceride hydrolysis, to avoid its accumulation in adipocytes and to make it available to other tissues. In the kidney, mediates the reabsorption of glycerol, preventing its loss in urine, again participating to energy homeostasis. In pancreatic beta cells, it also mediates the efflux of glycerol, regulating its intracellular levels (By similarity).</text>
</comment>
<comment type="catalytic activity">
    <reaction evidence="7 8 10 11">
        <text>glycerol(in) = glycerol(out)</text>
        <dbReference type="Rhea" id="RHEA:29675"/>
        <dbReference type="ChEBI" id="CHEBI:17754"/>
    </reaction>
</comment>
<comment type="catalytic activity">
    <reaction evidence="7 8 10 11">
        <text>H2O(in) = H2O(out)</text>
        <dbReference type="Rhea" id="RHEA:29667"/>
        <dbReference type="ChEBI" id="CHEBI:15377"/>
    </reaction>
</comment>
<comment type="catalytic activity">
    <reaction evidence="11">
        <text>urea(in) = urea(out)</text>
        <dbReference type="Rhea" id="RHEA:32799"/>
        <dbReference type="ChEBI" id="CHEBI:16199"/>
    </reaction>
</comment>
<comment type="activity regulation">
    <text evidence="7 8 11">Glycerol transport is regulated by pH, with the porin being permeable to glycerol at pH 7.4 but not at pH 5.5 (PubMed:30420639, PubMed:30423801). Water permeability, however, is not influenced by pH (PubMed:30420639, PubMed:30423801). Inhibited by mercury ions (PubMed:9405233).</text>
</comment>
<comment type="subunit">
    <text evidence="5 8 9 10 19">Homotetramer; each monomer provides an independent glycerol/water pore (PubMed:30423801, PubMed:32695023, PubMed:36737436). Two homotetramers on opposing membranes can dimerize, forming a cell-cell junction (PubMed:36737436). Interacts with PLIN1 (PubMed:27832861).</text>
</comment>
<comment type="interaction">
    <interactant intactId="EBI-20765950">
        <id>O14520</id>
    </interactant>
    <interactant intactId="EBI-26906001">
        <id>O60240</id>
        <label>PLIN1</label>
    </interactant>
    <organismsDiffer>false</organismsDiffer>
    <experiments>4</experiments>
</comment>
<comment type="subcellular location">
    <subcellularLocation>
        <location evidence="3 6 8 11">Cell membrane</location>
        <topology evidence="10">Multi-pass membrane protein</topology>
    </subcellularLocation>
    <subcellularLocation>
        <location evidence="18">Cytoplasmic vesicle membrane</location>
        <topology evidence="10">Multi-pass membrane protein</topology>
    </subcellularLocation>
    <subcellularLocation>
        <location evidence="18">Lipid droplet</location>
    </subcellularLocation>
    <text evidence="1 5">Internalized from the cell membrane in response to catecholamine-induced activation of PKA; detected on intracellular membranes and colocalizes with lipid droplets (By similarity). Colocalizes with PLIN1 in adipocytes, probably on lipid droplets (PubMed:27832861).</text>
</comment>
<comment type="alternative products">
    <event type="alternative splicing"/>
    <isoform>
        <id>O14520-1</id>
        <name>1</name>
        <sequence type="displayed"/>
    </isoform>
    <isoform>
        <id>O14520-2</id>
        <name>2</name>
        <sequence type="described" ref="VSP_056249 VSP_056250"/>
    </isoform>
</comment>
<comment type="tissue specificity">
    <text evidence="6 11">Detected in the sperm head (at protein level) (PubMed:28042826). Detected in white adipose tissue (PubMed:9405233).</text>
</comment>
<comment type="domain">
    <text evidence="20">Aquaporins contain two tandem repeats each containing three membrane-spanning domains and a pore-forming loop with the signature motif Asn-Pro/Ala-Ala/Ser (NPA).</text>
</comment>
<comment type="PTM">
    <text evidence="5">Phosphorylation by PKA could prevent the interaction with PLIN1.</text>
</comment>
<comment type="polymorphism">
    <text>Genetic variations in AQP7 are responsible for changes in glycerol release during exercise and define the glycerol quantitative trait locus (GLYCQTL) [MIM:614411].</text>
</comment>
<comment type="similarity">
    <text evidence="17">Belongs to the MIP/aquaporin (TC 1.A.8) family.</text>
</comment>
<accession>O14520</accession>
<accession>Q08E94</accession>
<accession>Q5T5L9</accession>
<accession>Q8NHM3</accession>
<evidence type="ECO:0000250" key="1">
    <source>
        <dbReference type="UniProtKB" id="O54794"/>
    </source>
</evidence>
<evidence type="ECO:0000250" key="2">
    <source>
        <dbReference type="UniProtKB" id="P56403"/>
    </source>
</evidence>
<evidence type="ECO:0000269" key="3">
    <source>
    </source>
</evidence>
<evidence type="ECO:0000269" key="4">
    <source>
    </source>
</evidence>
<evidence type="ECO:0000269" key="5">
    <source>
    </source>
</evidence>
<evidence type="ECO:0000269" key="6">
    <source>
    </source>
</evidence>
<evidence type="ECO:0000269" key="7">
    <source>
    </source>
</evidence>
<evidence type="ECO:0000269" key="8">
    <source>
    </source>
</evidence>
<evidence type="ECO:0000269" key="9">
    <source>
    </source>
</evidence>
<evidence type="ECO:0000269" key="10">
    <source>
    </source>
</evidence>
<evidence type="ECO:0000269" key="11">
    <source>
    </source>
</evidence>
<evidence type="ECO:0000303" key="12">
    <source>
    </source>
</evidence>
<evidence type="ECO:0000303" key="13">
    <source>
    </source>
</evidence>
<evidence type="ECO:0000303" key="14">
    <source>
    </source>
</evidence>
<evidence type="ECO:0000303" key="15">
    <source>
    </source>
</evidence>
<evidence type="ECO:0000303" key="16">
    <source>
    </source>
</evidence>
<evidence type="ECO:0000305" key="17"/>
<evidence type="ECO:0000305" key="18">
    <source>
    </source>
</evidence>
<evidence type="ECO:0000305" key="19">
    <source>
    </source>
</evidence>
<evidence type="ECO:0000305" key="20">
    <source>
    </source>
</evidence>
<evidence type="ECO:0000312" key="21">
    <source>
        <dbReference type="HGNC" id="HGNC:640"/>
    </source>
</evidence>
<evidence type="ECO:0007744" key="22">
    <source>
        <dbReference type="PDB" id="6N1G"/>
    </source>
</evidence>
<evidence type="ECO:0007744" key="23">
    <source>
        <dbReference type="PDB" id="8AMW"/>
    </source>
</evidence>
<evidence type="ECO:0007744" key="24">
    <source>
        <dbReference type="PDB" id="8AMX"/>
    </source>
</evidence>
<evidence type="ECO:0007829" key="25">
    <source>
        <dbReference type="PDB" id="6QZI"/>
    </source>
</evidence>
<evidence type="ECO:0007829" key="26">
    <source>
        <dbReference type="PDB" id="8AMX"/>
    </source>
</evidence>